<dbReference type="EMBL" id="CP000804">
    <property type="protein sequence ID" value="ABU60035.1"/>
    <property type="molecule type" value="Genomic_DNA"/>
</dbReference>
<dbReference type="RefSeq" id="WP_012122458.1">
    <property type="nucleotide sequence ID" value="NC_009767.1"/>
</dbReference>
<dbReference type="SMR" id="A7NR39"/>
<dbReference type="STRING" id="383372.Rcas_4002"/>
<dbReference type="KEGG" id="rca:Rcas_4002"/>
<dbReference type="eggNOG" id="COG0099">
    <property type="taxonomic scope" value="Bacteria"/>
</dbReference>
<dbReference type="HOGENOM" id="CLU_103849_1_2_0"/>
<dbReference type="OrthoDB" id="9803610at2"/>
<dbReference type="Proteomes" id="UP000000263">
    <property type="component" value="Chromosome"/>
</dbReference>
<dbReference type="GO" id="GO:0005829">
    <property type="term" value="C:cytosol"/>
    <property type="evidence" value="ECO:0007669"/>
    <property type="project" value="TreeGrafter"/>
</dbReference>
<dbReference type="GO" id="GO:0015935">
    <property type="term" value="C:small ribosomal subunit"/>
    <property type="evidence" value="ECO:0007669"/>
    <property type="project" value="TreeGrafter"/>
</dbReference>
<dbReference type="GO" id="GO:0019843">
    <property type="term" value="F:rRNA binding"/>
    <property type="evidence" value="ECO:0007669"/>
    <property type="project" value="UniProtKB-UniRule"/>
</dbReference>
<dbReference type="GO" id="GO:0003735">
    <property type="term" value="F:structural constituent of ribosome"/>
    <property type="evidence" value="ECO:0007669"/>
    <property type="project" value="InterPro"/>
</dbReference>
<dbReference type="GO" id="GO:0000049">
    <property type="term" value="F:tRNA binding"/>
    <property type="evidence" value="ECO:0007669"/>
    <property type="project" value="UniProtKB-UniRule"/>
</dbReference>
<dbReference type="GO" id="GO:0006412">
    <property type="term" value="P:translation"/>
    <property type="evidence" value="ECO:0007669"/>
    <property type="project" value="UniProtKB-UniRule"/>
</dbReference>
<dbReference type="FunFam" id="1.10.8.50:FF:000001">
    <property type="entry name" value="30S ribosomal protein S13"/>
    <property type="match status" value="1"/>
</dbReference>
<dbReference type="FunFam" id="4.10.910.10:FF:000001">
    <property type="entry name" value="30S ribosomal protein S13"/>
    <property type="match status" value="1"/>
</dbReference>
<dbReference type="Gene3D" id="1.10.8.50">
    <property type="match status" value="1"/>
</dbReference>
<dbReference type="Gene3D" id="4.10.910.10">
    <property type="entry name" value="30s ribosomal protein s13, domain 2"/>
    <property type="match status" value="1"/>
</dbReference>
<dbReference type="HAMAP" id="MF_01315">
    <property type="entry name" value="Ribosomal_uS13"/>
    <property type="match status" value="1"/>
</dbReference>
<dbReference type="InterPro" id="IPR027437">
    <property type="entry name" value="Rbsml_uS13_C"/>
</dbReference>
<dbReference type="InterPro" id="IPR001892">
    <property type="entry name" value="Ribosomal_uS13"/>
</dbReference>
<dbReference type="InterPro" id="IPR010979">
    <property type="entry name" value="Ribosomal_uS13-like_H2TH"/>
</dbReference>
<dbReference type="InterPro" id="IPR019980">
    <property type="entry name" value="Ribosomal_uS13_bac-type"/>
</dbReference>
<dbReference type="InterPro" id="IPR018269">
    <property type="entry name" value="Ribosomal_uS13_CS"/>
</dbReference>
<dbReference type="NCBIfam" id="TIGR03631">
    <property type="entry name" value="uS13_bact"/>
    <property type="match status" value="1"/>
</dbReference>
<dbReference type="PANTHER" id="PTHR10871">
    <property type="entry name" value="30S RIBOSOMAL PROTEIN S13/40S RIBOSOMAL PROTEIN S18"/>
    <property type="match status" value="1"/>
</dbReference>
<dbReference type="PANTHER" id="PTHR10871:SF1">
    <property type="entry name" value="SMALL RIBOSOMAL SUBUNIT PROTEIN US13M"/>
    <property type="match status" value="1"/>
</dbReference>
<dbReference type="Pfam" id="PF00416">
    <property type="entry name" value="Ribosomal_S13"/>
    <property type="match status" value="1"/>
</dbReference>
<dbReference type="PIRSF" id="PIRSF002134">
    <property type="entry name" value="Ribosomal_S13"/>
    <property type="match status" value="1"/>
</dbReference>
<dbReference type="SUPFAM" id="SSF46946">
    <property type="entry name" value="S13-like H2TH domain"/>
    <property type="match status" value="1"/>
</dbReference>
<dbReference type="PROSITE" id="PS00646">
    <property type="entry name" value="RIBOSOMAL_S13_1"/>
    <property type="match status" value="1"/>
</dbReference>
<dbReference type="PROSITE" id="PS50159">
    <property type="entry name" value="RIBOSOMAL_S13_2"/>
    <property type="match status" value="1"/>
</dbReference>
<keyword id="KW-1185">Reference proteome</keyword>
<keyword id="KW-0687">Ribonucleoprotein</keyword>
<keyword id="KW-0689">Ribosomal protein</keyword>
<keyword id="KW-0694">RNA-binding</keyword>
<keyword id="KW-0699">rRNA-binding</keyword>
<keyword id="KW-0820">tRNA-binding</keyword>
<evidence type="ECO:0000255" key="1">
    <source>
        <dbReference type="HAMAP-Rule" id="MF_01315"/>
    </source>
</evidence>
<evidence type="ECO:0000256" key="2">
    <source>
        <dbReference type="SAM" id="MobiDB-lite"/>
    </source>
</evidence>
<evidence type="ECO:0000305" key="3"/>
<feature type="chain" id="PRO_1000086255" description="Small ribosomal subunit protein uS13">
    <location>
        <begin position="1"/>
        <end position="127"/>
    </location>
</feature>
<feature type="region of interest" description="Disordered" evidence="2">
    <location>
        <begin position="99"/>
        <end position="127"/>
    </location>
</feature>
<comment type="function">
    <text evidence="1">Located at the top of the head of the 30S subunit, it contacts several helices of the 16S rRNA. In the 70S ribosome it contacts the 23S rRNA (bridge B1a) and protein L5 of the 50S subunit (bridge B1b), connecting the 2 subunits; these bridges are implicated in subunit movement. Contacts the tRNAs in the A and P-sites.</text>
</comment>
<comment type="subunit">
    <text evidence="1">Part of the 30S ribosomal subunit. Forms a loose heterodimer with protein S19. Forms two bridges to the 50S subunit in the 70S ribosome.</text>
</comment>
<comment type="similarity">
    <text evidence="1">Belongs to the universal ribosomal protein uS13 family.</text>
</comment>
<name>RS13_ROSCS</name>
<proteinExistence type="inferred from homology"/>
<reference key="1">
    <citation type="submission" date="2007-08" db="EMBL/GenBank/DDBJ databases">
        <title>Complete sequence of Roseiflexus castenholzii DSM 13941.</title>
        <authorList>
            <consortium name="US DOE Joint Genome Institute"/>
            <person name="Copeland A."/>
            <person name="Lucas S."/>
            <person name="Lapidus A."/>
            <person name="Barry K."/>
            <person name="Glavina del Rio T."/>
            <person name="Dalin E."/>
            <person name="Tice H."/>
            <person name="Pitluck S."/>
            <person name="Thompson L.S."/>
            <person name="Brettin T."/>
            <person name="Bruce D."/>
            <person name="Detter J.C."/>
            <person name="Han C."/>
            <person name="Tapia R."/>
            <person name="Schmutz J."/>
            <person name="Larimer F."/>
            <person name="Land M."/>
            <person name="Hauser L."/>
            <person name="Kyrpides N."/>
            <person name="Mikhailova N."/>
            <person name="Bryant D.A."/>
            <person name="Hanada S."/>
            <person name="Tsukatani Y."/>
            <person name="Richardson P."/>
        </authorList>
    </citation>
    <scope>NUCLEOTIDE SEQUENCE [LARGE SCALE GENOMIC DNA]</scope>
    <source>
        <strain>DSM 13941 / HLO8</strain>
    </source>
</reference>
<sequence>MARIAGVDLPRNKTIEIAITYIFGIGRSNGADVLRKANVNPATRVRDLTEEEVSRIREIVEREYRVEGDLRREIQMNIKRLMDIGCYRGLRHRKGLPVRGQRTRTNARTRRGRRGQAIGIKKKTLKK</sequence>
<gene>
    <name evidence="1" type="primary">rpsM</name>
    <name type="ordered locus">Rcas_4002</name>
</gene>
<protein>
    <recommendedName>
        <fullName evidence="1">Small ribosomal subunit protein uS13</fullName>
    </recommendedName>
    <alternativeName>
        <fullName evidence="3">30S ribosomal protein S13</fullName>
    </alternativeName>
</protein>
<accession>A7NR39</accession>
<organism>
    <name type="scientific">Roseiflexus castenholzii (strain DSM 13941 / HLO8)</name>
    <dbReference type="NCBI Taxonomy" id="383372"/>
    <lineage>
        <taxon>Bacteria</taxon>
        <taxon>Bacillati</taxon>
        <taxon>Chloroflexota</taxon>
        <taxon>Chloroflexia</taxon>
        <taxon>Chloroflexales</taxon>
        <taxon>Roseiflexineae</taxon>
        <taxon>Roseiflexaceae</taxon>
        <taxon>Roseiflexus</taxon>
    </lineage>
</organism>